<proteinExistence type="inferred from homology"/>
<gene>
    <name evidence="2" type="primary">otk</name>
    <name type="ORF">GD25868</name>
</gene>
<keyword id="KW-0130">Cell adhesion</keyword>
<keyword id="KW-1003">Cell membrane</keyword>
<keyword id="KW-1015">Disulfide bond</keyword>
<keyword id="KW-0325">Glycoprotein</keyword>
<keyword id="KW-0393">Immunoglobulin domain</keyword>
<keyword id="KW-0472">Membrane</keyword>
<keyword id="KW-0524">Neurogenesis</keyword>
<keyword id="KW-0597">Phosphoprotein</keyword>
<keyword id="KW-0675">Receptor</keyword>
<keyword id="KW-1185">Reference proteome</keyword>
<keyword id="KW-0677">Repeat</keyword>
<keyword id="KW-0732">Signal</keyword>
<keyword id="KW-0812">Transmembrane</keyword>
<keyword id="KW-1133">Transmembrane helix</keyword>
<name>PTK7_DROSI</name>
<dbReference type="EMBL" id="CM000362">
    <property type="protein sequence ID" value="EDX06694.1"/>
    <property type="molecule type" value="Genomic_DNA"/>
</dbReference>
<dbReference type="SMR" id="B4QC63"/>
<dbReference type="STRING" id="7240.B4QC63"/>
<dbReference type="GlyCosmos" id="B4QC63">
    <property type="glycosylation" value="8 sites, No reported glycans"/>
</dbReference>
<dbReference type="HOGENOM" id="CLU_012268_0_0_1"/>
<dbReference type="OMA" id="SHLHIEA"/>
<dbReference type="OrthoDB" id="2413561at2759"/>
<dbReference type="PhylomeDB" id="B4QC63"/>
<dbReference type="ChiTaRS" id="otk">
    <property type="organism name" value="fly"/>
</dbReference>
<dbReference type="Proteomes" id="UP000000304">
    <property type="component" value="Chromosome 2R"/>
</dbReference>
<dbReference type="GO" id="GO:0030424">
    <property type="term" value="C:axon"/>
    <property type="evidence" value="ECO:0007669"/>
    <property type="project" value="EnsemblMetazoa"/>
</dbReference>
<dbReference type="GO" id="GO:0005886">
    <property type="term" value="C:plasma membrane"/>
    <property type="evidence" value="ECO:0000250"/>
    <property type="project" value="UniProtKB"/>
</dbReference>
<dbReference type="GO" id="GO:0005524">
    <property type="term" value="F:ATP binding"/>
    <property type="evidence" value="ECO:0007669"/>
    <property type="project" value="InterPro"/>
</dbReference>
<dbReference type="GO" id="GO:0050839">
    <property type="term" value="F:cell adhesion molecule binding"/>
    <property type="evidence" value="ECO:0000250"/>
    <property type="project" value="UniProtKB"/>
</dbReference>
<dbReference type="GO" id="GO:0098632">
    <property type="term" value="F:cell-cell adhesion mediator activity"/>
    <property type="evidence" value="ECO:0007669"/>
    <property type="project" value="TreeGrafter"/>
</dbReference>
<dbReference type="GO" id="GO:0046982">
    <property type="term" value="F:protein heterodimerization activity"/>
    <property type="evidence" value="ECO:0007669"/>
    <property type="project" value="EnsemblMetazoa"/>
</dbReference>
<dbReference type="GO" id="GO:0042803">
    <property type="term" value="F:protein homodimerization activity"/>
    <property type="evidence" value="ECO:0007669"/>
    <property type="project" value="EnsemblMetazoa"/>
</dbReference>
<dbReference type="GO" id="GO:0004672">
    <property type="term" value="F:protein kinase activity"/>
    <property type="evidence" value="ECO:0000250"/>
    <property type="project" value="UniProtKB"/>
</dbReference>
<dbReference type="GO" id="GO:0038023">
    <property type="term" value="F:signaling receptor activity"/>
    <property type="evidence" value="ECO:0000250"/>
    <property type="project" value="UniProtKB"/>
</dbReference>
<dbReference type="GO" id="GO:0004714">
    <property type="term" value="F:transmembrane receptor protein tyrosine kinase activity"/>
    <property type="evidence" value="ECO:0007669"/>
    <property type="project" value="EnsemblMetazoa"/>
</dbReference>
<dbReference type="GO" id="GO:0017147">
    <property type="term" value="F:Wnt-protein binding"/>
    <property type="evidence" value="ECO:0007669"/>
    <property type="project" value="EnsemblMetazoa"/>
</dbReference>
<dbReference type="GO" id="GO:0007155">
    <property type="term" value="P:cell adhesion"/>
    <property type="evidence" value="ECO:0000250"/>
    <property type="project" value="UniProtKB"/>
</dbReference>
<dbReference type="GO" id="GO:0070593">
    <property type="term" value="P:dendrite self-avoidance"/>
    <property type="evidence" value="ECO:0007669"/>
    <property type="project" value="TreeGrafter"/>
</dbReference>
<dbReference type="GO" id="GO:0007156">
    <property type="term" value="P:homophilic cell adhesion via plasma membrane adhesion molecules"/>
    <property type="evidence" value="ECO:0007669"/>
    <property type="project" value="TreeGrafter"/>
</dbReference>
<dbReference type="GO" id="GO:0048804">
    <property type="term" value="P:imaginal disc-derived female genitalia morphogenesis"/>
    <property type="evidence" value="ECO:0007669"/>
    <property type="project" value="EnsemblMetazoa"/>
</dbReference>
<dbReference type="GO" id="GO:0048803">
    <property type="term" value="P:imaginal disc-derived male genitalia morphogenesis"/>
    <property type="evidence" value="ECO:0007669"/>
    <property type="project" value="EnsemblMetazoa"/>
</dbReference>
<dbReference type="GO" id="GO:0035260">
    <property type="term" value="P:internal genitalia morphogenesis"/>
    <property type="evidence" value="ECO:0007669"/>
    <property type="project" value="EnsemblMetazoa"/>
</dbReference>
<dbReference type="GO" id="GO:0090090">
    <property type="term" value="P:negative regulation of canonical Wnt signaling pathway"/>
    <property type="evidence" value="ECO:0007669"/>
    <property type="project" value="EnsemblMetazoa"/>
</dbReference>
<dbReference type="GO" id="GO:0072499">
    <property type="term" value="P:photoreceptor cell axon guidance"/>
    <property type="evidence" value="ECO:0007669"/>
    <property type="project" value="EnsemblMetazoa"/>
</dbReference>
<dbReference type="GO" id="GO:0031290">
    <property type="term" value="P:retinal ganglion cell axon guidance"/>
    <property type="evidence" value="ECO:0000250"/>
    <property type="project" value="UniProtKB"/>
</dbReference>
<dbReference type="CDD" id="cd00096">
    <property type="entry name" value="Ig"/>
    <property type="match status" value="1"/>
</dbReference>
<dbReference type="CDD" id="cd05046">
    <property type="entry name" value="PTK_CCK4"/>
    <property type="match status" value="1"/>
</dbReference>
<dbReference type="FunFam" id="1.10.510.10:FF:000954">
    <property type="entry name" value="Tyrosine-protein kinase-like otk"/>
    <property type="match status" value="1"/>
</dbReference>
<dbReference type="FunFam" id="2.60.40.10:FF:001805">
    <property type="entry name" value="Tyrosine-protein kinase-like otk"/>
    <property type="match status" value="1"/>
</dbReference>
<dbReference type="FunFam" id="2.60.40.10:FF:002027">
    <property type="entry name" value="Tyrosine-protein kinase-like otk"/>
    <property type="match status" value="1"/>
</dbReference>
<dbReference type="FunFam" id="2.60.40.10:FF:002086">
    <property type="entry name" value="Tyrosine-protein kinase-like otk"/>
    <property type="match status" value="1"/>
</dbReference>
<dbReference type="FunFam" id="2.60.40.10:FF:002809">
    <property type="entry name" value="Tyrosine-protein kinase-like otk"/>
    <property type="match status" value="1"/>
</dbReference>
<dbReference type="FunFam" id="3.30.200.20:FF:001776">
    <property type="entry name" value="Tyrosine-protein kinase-like otk"/>
    <property type="match status" value="1"/>
</dbReference>
<dbReference type="FunFam" id="2.60.40.10:FF:002127">
    <property type="entry name" value="tyrosine-protein kinase-like otk"/>
    <property type="match status" value="1"/>
</dbReference>
<dbReference type="Gene3D" id="2.60.40.10">
    <property type="entry name" value="Immunoglobulins"/>
    <property type="match status" value="5"/>
</dbReference>
<dbReference type="Gene3D" id="1.10.510.10">
    <property type="entry name" value="Transferase(Phosphotransferase) domain 1"/>
    <property type="match status" value="1"/>
</dbReference>
<dbReference type="InterPro" id="IPR007110">
    <property type="entry name" value="Ig-like_dom"/>
</dbReference>
<dbReference type="InterPro" id="IPR036179">
    <property type="entry name" value="Ig-like_dom_sf"/>
</dbReference>
<dbReference type="InterPro" id="IPR013783">
    <property type="entry name" value="Ig-like_fold"/>
</dbReference>
<dbReference type="InterPro" id="IPR013098">
    <property type="entry name" value="Ig_I-set"/>
</dbReference>
<dbReference type="InterPro" id="IPR003599">
    <property type="entry name" value="Ig_sub"/>
</dbReference>
<dbReference type="InterPro" id="IPR003598">
    <property type="entry name" value="Ig_sub2"/>
</dbReference>
<dbReference type="InterPro" id="IPR011009">
    <property type="entry name" value="Kinase-like_dom_sf"/>
</dbReference>
<dbReference type="InterPro" id="IPR000719">
    <property type="entry name" value="Prot_kinase_dom"/>
</dbReference>
<dbReference type="InterPro" id="IPR001245">
    <property type="entry name" value="Ser-Thr/Tyr_kinase_cat_dom"/>
</dbReference>
<dbReference type="InterPro" id="IPR008266">
    <property type="entry name" value="Tyr_kinase_AS"/>
</dbReference>
<dbReference type="InterPro" id="IPR020635">
    <property type="entry name" value="Tyr_kinase_cat_dom"/>
</dbReference>
<dbReference type="PANTHER" id="PTHR10075">
    <property type="entry name" value="BASIGIN RELATED"/>
    <property type="match status" value="1"/>
</dbReference>
<dbReference type="PANTHER" id="PTHR10075:SF78">
    <property type="entry name" value="PROTEIN BORDERLESS"/>
    <property type="match status" value="1"/>
</dbReference>
<dbReference type="Pfam" id="PF07679">
    <property type="entry name" value="I-set"/>
    <property type="match status" value="3"/>
</dbReference>
<dbReference type="Pfam" id="PF13927">
    <property type="entry name" value="Ig_3"/>
    <property type="match status" value="1"/>
</dbReference>
<dbReference type="Pfam" id="PF07714">
    <property type="entry name" value="PK_Tyr_Ser-Thr"/>
    <property type="match status" value="1"/>
</dbReference>
<dbReference type="PIRSF" id="PIRSF000615">
    <property type="entry name" value="TyrPK_CSF1-R"/>
    <property type="match status" value="1"/>
</dbReference>
<dbReference type="PRINTS" id="PR00109">
    <property type="entry name" value="TYRKINASE"/>
</dbReference>
<dbReference type="SMART" id="SM00409">
    <property type="entry name" value="IG"/>
    <property type="match status" value="5"/>
</dbReference>
<dbReference type="SMART" id="SM00408">
    <property type="entry name" value="IGc2"/>
    <property type="match status" value="5"/>
</dbReference>
<dbReference type="SMART" id="SM00219">
    <property type="entry name" value="TyrKc"/>
    <property type="match status" value="1"/>
</dbReference>
<dbReference type="SUPFAM" id="SSF48726">
    <property type="entry name" value="Immunoglobulin"/>
    <property type="match status" value="4"/>
</dbReference>
<dbReference type="SUPFAM" id="SSF56112">
    <property type="entry name" value="Protein kinase-like (PK-like)"/>
    <property type="match status" value="1"/>
</dbReference>
<dbReference type="PROSITE" id="PS50835">
    <property type="entry name" value="IG_LIKE"/>
    <property type="match status" value="5"/>
</dbReference>
<dbReference type="PROSITE" id="PS50011">
    <property type="entry name" value="PROTEIN_KINASE_DOM"/>
    <property type="match status" value="1"/>
</dbReference>
<dbReference type="PROSITE" id="PS00109">
    <property type="entry name" value="PROTEIN_KINASE_TYR"/>
    <property type="match status" value="1"/>
</dbReference>
<protein>
    <recommendedName>
        <fullName evidence="2">Tyrosine-protein kinase-like otk</fullName>
    </recommendedName>
    <alternativeName>
        <fullName>Tyrosine-protein kinase-like 7 homolog</fullName>
    </alternativeName>
</protein>
<accession>B4QC63</accession>
<reference evidence="8" key="1">
    <citation type="journal article" date="2007" name="Nature">
        <title>Evolution of genes and genomes on the Drosophila phylogeny.</title>
        <authorList>
            <consortium name="Drosophila 12 genomes consortium"/>
        </authorList>
    </citation>
    <scope>NUCLEOTIDE SEQUENCE [LARGE SCALE GENOMIC DNA]</scope>
</reference>
<comment type="function">
    <text evidence="1">Acts as a calcium-dependent, homophilic cell adhesion molecule that regulates neural recognition during the development of the nervous system. Component of the repulsive Plexin signaling response to regulate motor axon guidance at the embryonic stage. Also component of a receptor complex that is required in the adult visual system to innervate the lamina layer; specific targeting of R1-R6 axons (By similarity).</text>
</comment>
<comment type="subunit">
    <text evidence="1">Interacts with plexA; component of a receptor complex that mediates the repulsive signaling in response to Semaphorin ligands.</text>
</comment>
<comment type="subcellular location">
    <subcellularLocation>
        <location evidence="2">Cell membrane</location>
        <topology evidence="2">Single-pass type I membrane protein</topology>
    </subcellularLocation>
</comment>
<comment type="similarity">
    <text evidence="5">Belongs to the protein kinase superfamily. Tyr protein kinase family. Insulin receptor subfamily.</text>
</comment>
<comment type="caution">
    <text evidence="7">The D.melanogaster ortholog of this protein has been proposed to undergo autophosphorylation on tyrosine residues which is induced in response to cell adhesion (PubMed:1371458). However as mammalian orthologs of this protein seem to lack kinase activity it may be that this protein associates with, and is phosphorylated by, an unknown active tyrosine kinase.</text>
</comment>
<sequence length="1029" mass="113903">MISIYGLVMALMMASVLASSSRFQRVPQSQSVVENESVKFECESTDSYSELHYDWLHNGHRIAYDKRVHQIGSNLHIEAVRRTEDVGNYVCIATNLASGAREASPPAKLSVIYLESASVQLLGSNRNELLLKCHVEGASGDLEPLEIEWYRNSEKLSTWKNVQLDQHRLIIRQPGSEDDGLYRCTASNAAGRVMSKQGYVYQSSVKCLPRLPRRKNQKMMESWDKQTFLCRGKRGGAAGLEALPAVPEDLRIVQGPIAQSIIKEGEPTALTCLYELPDELKNQRIQLRWRKDGKLLRQVELGGSAPILGHSFDSGKDALLREDARLVLHKQNGTLSFASIIASDAGQYQCQLQLEAHAPISSSPGILEVIEQLKFVPQPTSKNLELDAVVAKVHCKAQGTPTPQVQWIRDGENTTLPDQVEVDANGTLIFRNVNSEHRGNYTCLATNTQGQINATVAINVVVTPKFSVPPVGPIETSEQGTVVMHCQAIGDPKPTIQWDKDLKYLSENNTDRERFRFLENGTLEIRNVQVEDEGSYGCTIGNSAGLKREDVQLVVKTTGDGFAPEESGGDGFLVTRAVLITMTVALAYIVLVVGLMLWCRYRRQARKARLNDLSTKEAGGDQPDAAGNGKGSEQEPCLSKQHNGHSKSRSKSSGDAQKSDDTACSQQSRASKKSAHIYEQLALPRSGLSELIQIGRGEFGDVFVGKLKATLVTSPSDKDADTEKQHSNSENGSGGSGSGSTTLSTLNEKRRSKTSMDDIEEIKEEEQEQHNQSGLEQLVLVKALNKVKDEQACQEFRRQLDLLRAISHKGVVRLFGLCREKDPHYMVLEYTDWGDLKQFLLATAGKVNTATAGSSSPPPLTTSQVLAVAYQIARGMDAIYRARFTHRDLATRNCVISSEFIVKVSYPALCKDKYSREYHKHRNTLLPIRWLAPECIQEDEYTTKSDIFAYGVVVWELFNQATKLPHEELTNEQVVQRSQAGSLEWSVAEATPDSLREILLSCWVSNPKERPSFSQLGAALSKAMQSAEK</sequence>
<evidence type="ECO:0000250" key="1"/>
<evidence type="ECO:0000250" key="2">
    <source>
        <dbReference type="UniProtKB" id="Q6AWJ9"/>
    </source>
</evidence>
<evidence type="ECO:0000255" key="3"/>
<evidence type="ECO:0000255" key="4">
    <source>
        <dbReference type="PROSITE-ProRule" id="PRU00114"/>
    </source>
</evidence>
<evidence type="ECO:0000255" key="5">
    <source>
        <dbReference type="PROSITE-ProRule" id="PRU00159"/>
    </source>
</evidence>
<evidence type="ECO:0000256" key="6">
    <source>
        <dbReference type="SAM" id="MobiDB-lite"/>
    </source>
</evidence>
<evidence type="ECO:0000305" key="7"/>
<evidence type="ECO:0000312" key="8">
    <source>
        <dbReference type="EMBL" id="EDX06694.1"/>
    </source>
</evidence>
<feature type="signal peptide" evidence="3">
    <location>
        <begin position="1"/>
        <end position="18"/>
    </location>
</feature>
<feature type="chain" id="PRO_0000388692" description="Tyrosine-protein kinase-like otk" evidence="3">
    <location>
        <begin position="19"/>
        <end position="1029"/>
    </location>
</feature>
<feature type="topological domain" description="Extracellular" evidence="3">
    <location>
        <begin position="19"/>
        <end position="577"/>
    </location>
</feature>
<feature type="transmembrane region" description="Helical" evidence="3">
    <location>
        <begin position="578"/>
        <end position="598"/>
    </location>
</feature>
<feature type="topological domain" description="Cytoplasmic" evidence="3">
    <location>
        <begin position="599"/>
        <end position="1029"/>
    </location>
</feature>
<feature type="domain" description="Ig-like C2-type 1" evidence="3">
    <location>
        <begin position="21"/>
        <end position="110"/>
    </location>
</feature>
<feature type="domain" description="Ig-like C2-type 2" evidence="3">
    <location>
        <begin position="109"/>
        <end position="195"/>
    </location>
</feature>
<feature type="domain" description="Ig-like C2-type 3" evidence="3">
    <location>
        <begin position="247"/>
        <end position="361"/>
    </location>
</feature>
<feature type="domain" description="Ig-like C2-type 4" evidence="3">
    <location>
        <begin position="364"/>
        <end position="459"/>
    </location>
</feature>
<feature type="domain" description="Ig-like C2-type 5" evidence="3">
    <location>
        <begin position="464"/>
        <end position="554"/>
    </location>
</feature>
<feature type="domain" description="Protein kinase; inactive" evidence="5 7">
    <location>
        <begin position="688"/>
        <end position="1024"/>
    </location>
</feature>
<feature type="region of interest" description="Disordered" evidence="6">
    <location>
        <begin position="613"/>
        <end position="675"/>
    </location>
</feature>
<feature type="region of interest" description="Disordered" evidence="6">
    <location>
        <begin position="714"/>
        <end position="756"/>
    </location>
</feature>
<feature type="compositionally biased region" description="Polar residues" evidence="6">
    <location>
        <begin position="651"/>
        <end position="669"/>
    </location>
</feature>
<feature type="compositionally biased region" description="Basic and acidic residues" evidence="6">
    <location>
        <begin position="716"/>
        <end position="727"/>
    </location>
</feature>
<feature type="modified residue" description="Phosphoserine" evidence="2">
    <location>
        <position position="674"/>
    </location>
</feature>
<feature type="glycosylation site" description="N-linked (GlcNAc...) asparagine" evidence="3">
    <location>
        <position position="35"/>
    </location>
</feature>
<feature type="glycosylation site" description="N-linked (GlcNAc...) asparagine" evidence="3">
    <location>
        <position position="332"/>
    </location>
</feature>
<feature type="glycosylation site" description="N-linked (GlcNAc...) asparagine" evidence="3">
    <location>
        <position position="413"/>
    </location>
</feature>
<feature type="glycosylation site" description="N-linked (GlcNAc...) asparagine" evidence="3">
    <location>
        <position position="425"/>
    </location>
</feature>
<feature type="glycosylation site" description="N-linked (GlcNAc...) asparagine" evidence="3">
    <location>
        <position position="440"/>
    </location>
</feature>
<feature type="glycosylation site" description="N-linked (GlcNAc...) asparagine" evidence="3">
    <location>
        <position position="453"/>
    </location>
</feature>
<feature type="glycosylation site" description="N-linked (GlcNAc...) asparagine" evidence="3">
    <location>
        <position position="508"/>
    </location>
</feature>
<feature type="glycosylation site" description="N-linked (GlcNAc...) asparagine" evidence="3">
    <location>
        <position position="520"/>
    </location>
</feature>
<feature type="disulfide bond" evidence="4">
    <location>
        <begin position="42"/>
        <end position="91"/>
    </location>
</feature>
<feature type="disulfide bond" evidence="4">
    <location>
        <begin position="133"/>
        <end position="184"/>
    </location>
</feature>
<feature type="disulfide bond" evidence="4">
    <location>
        <begin position="272"/>
        <end position="350"/>
    </location>
</feature>
<feature type="disulfide bond" evidence="4">
    <location>
        <begin position="395"/>
        <end position="443"/>
    </location>
</feature>
<feature type="disulfide bond" evidence="4">
    <location>
        <begin position="486"/>
        <end position="538"/>
    </location>
</feature>
<organism>
    <name type="scientific">Drosophila simulans</name>
    <name type="common">Fruit fly</name>
    <dbReference type="NCBI Taxonomy" id="7240"/>
    <lineage>
        <taxon>Eukaryota</taxon>
        <taxon>Metazoa</taxon>
        <taxon>Ecdysozoa</taxon>
        <taxon>Arthropoda</taxon>
        <taxon>Hexapoda</taxon>
        <taxon>Insecta</taxon>
        <taxon>Pterygota</taxon>
        <taxon>Neoptera</taxon>
        <taxon>Endopterygota</taxon>
        <taxon>Diptera</taxon>
        <taxon>Brachycera</taxon>
        <taxon>Muscomorpha</taxon>
        <taxon>Ephydroidea</taxon>
        <taxon>Drosophilidae</taxon>
        <taxon>Drosophila</taxon>
        <taxon>Sophophora</taxon>
    </lineage>
</organism>